<sequence>MTKSISLSKRIFVIVILFVIVAVCTFFVQSCARKSNHAASFQNYHATIDGKEIAGITNNISSLTWSAQSNTLFSTINKPAAIVEMTTNGDLIRTIPLDFVKDLETIEYIGDNQFVISDERDYAIYVISLTPNSEVKILKKIKIPLQESPTNCGFEGLAYSRQDHTFWFFKEKNPIEVYKVNGLLSSNELHISKDKALQRQFTLDDVSGAEFNQQKNTLLVLSHESRALQEVTLVGEVIGEMSLTKGSRGLSHNIKQAEGVAMDASGNIYIVSEPNRFYRFTPQSSH</sequence>
<gene>
    <name type="primary">yjiK</name>
    <name type="ordered locus">Ecok1_43580</name>
    <name type="ORF">APECO1_2085</name>
</gene>
<keyword id="KW-1003">Cell membrane</keyword>
<keyword id="KW-0472">Membrane</keyword>
<keyword id="KW-1185">Reference proteome</keyword>
<keyword id="KW-0812">Transmembrane</keyword>
<keyword id="KW-1133">Transmembrane helix</keyword>
<organism>
    <name type="scientific">Escherichia coli O1:K1 / APEC</name>
    <dbReference type="NCBI Taxonomy" id="405955"/>
    <lineage>
        <taxon>Bacteria</taxon>
        <taxon>Pseudomonadati</taxon>
        <taxon>Pseudomonadota</taxon>
        <taxon>Gammaproteobacteria</taxon>
        <taxon>Enterobacterales</taxon>
        <taxon>Enterobacteriaceae</taxon>
        <taxon>Escherichia</taxon>
    </lineage>
</organism>
<name>YJIK_ECOK1</name>
<accession>A1AJL2</accession>
<proteinExistence type="inferred from homology"/>
<reference key="1">
    <citation type="journal article" date="2007" name="J. Bacteriol.">
        <title>The genome sequence of avian pathogenic Escherichia coli strain O1:K1:H7 shares strong similarities with human extraintestinal pathogenic E. coli genomes.</title>
        <authorList>
            <person name="Johnson T.J."/>
            <person name="Kariyawasam S."/>
            <person name="Wannemuehler Y."/>
            <person name="Mangiamele P."/>
            <person name="Johnson S.J."/>
            <person name="Doetkott C."/>
            <person name="Skyberg J.A."/>
            <person name="Lynne A.M."/>
            <person name="Johnson J.R."/>
            <person name="Nolan L.K."/>
        </authorList>
    </citation>
    <scope>NUCLEOTIDE SEQUENCE [LARGE SCALE GENOMIC DNA]</scope>
</reference>
<evidence type="ECO:0000255" key="1"/>
<evidence type="ECO:0000255" key="2">
    <source>
        <dbReference type="PROSITE-ProRule" id="PRU00303"/>
    </source>
</evidence>
<evidence type="ECO:0000305" key="3"/>
<comment type="subcellular location">
    <subcellularLocation>
        <location evidence="2">Cell membrane</location>
        <topology evidence="3">Single-pass membrane protein</topology>
    </subcellularLocation>
</comment>
<comment type="similarity">
    <text evidence="3">Belongs to the YjiK family.</text>
</comment>
<comment type="sequence caution" evidence="3">
    <conflict type="erroneous initiation">
        <sequence resource="EMBL-CDS" id="ABJ03852"/>
    </conflict>
</comment>
<dbReference type="EMBL" id="CP000468">
    <property type="protein sequence ID" value="ABJ03852.1"/>
    <property type="status" value="ALT_INIT"/>
    <property type="molecule type" value="Genomic_DNA"/>
</dbReference>
<dbReference type="RefSeq" id="WP_001300028.1">
    <property type="nucleotide sequence ID" value="NZ_CADILS010000050.1"/>
</dbReference>
<dbReference type="SMR" id="A1AJL2"/>
<dbReference type="KEGG" id="ecv:APECO1_2085"/>
<dbReference type="HOGENOM" id="CLU_055438_1_0_6"/>
<dbReference type="Proteomes" id="UP000008216">
    <property type="component" value="Chromosome"/>
</dbReference>
<dbReference type="GO" id="GO:0005886">
    <property type="term" value="C:plasma membrane"/>
    <property type="evidence" value="ECO:0007669"/>
    <property type="project" value="UniProtKB-SubCell"/>
</dbReference>
<dbReference type="CDD" id="cd09971">
    <property type="entry name" value="SdiA-regulated"/>
    <property type="match status" value="1"/>
</dbReference>
<dbReference type="Gene3D" id="2.120.10.30">
    <property type="entry name" value="TolB, C-terminal domain"/>
    <property type="match status" value="1"/>
</dbReference>
<dbReference type="InterPro" id="IPR011042">
    <property type="entry name" value="6-blade_b-propeller_TolB-like"/>
</dbReference>
<dbReference type="InterPro" id="IPR009722">
    <property type="entry name" value="YjiK/CarP"/>
</dbReference>
<dbReference type="Pfam" id="PF06977">
    <property type="entry name" value="SdiA-regulated"/>
    <property type="match status" value="1"/>
</dbReference>
<dbReference type="SUPFAM" id="SSF50956">
    <property type="entry name" value="Thermostable phytase (3-phytase)"/>
    <property type="match status" value="1"/>
</dbReference>
<dbReference type="PROSITE" id="PS51257">
    <property type="entry name" value="PROKAR_LIPOPROTEIN"/>
    <property type="match status" value="1"/>
</dbReference>
<protein>
    <recommendedName>
        <fullName>Uncharacterized protein YjiK</fullName>
    </recommendedName>
</protein>
<feature type="chain" id="PRO_0000294103" description="Uncharacterized protein YjiK">
    <location>
        <begin position="1"/>
        <end position="286"/>
    </location>
</feature>
<feature type="transmembrane region" description="Helical" evidence="1">
    <location>
        <begin position="11"/>
        <end position="31"/>
    </location>
</feature>